<sequence>MNFETVIGLEVHVELKTQSKIFSSSPTPFGAAANTQTSVIDLGYPGVLPVLNKEAVNFAMKAAMALNCEIATDTKFDRKNYFYPDNPKAYQISQFDKPIGENGWIEIEVEGKTKRIGITRLHLEEDAGKLTHTGDGYSLVDFNRQGTPLVEIVSEPDIRTPEEAYAYLEKLKSIIQYTGVSDCKMEEGSLRCDANISLRPIGREEFGTKTELKNLNSFAFVQKGLEFEEKRQEQVLLSGGLIEQETRRYDEASKKTILMRVKEGSDDYRYFPEPDLVELYIDDEWKERVRASIPELPDERRKRYIDDLGLPAYDAMVLTLTKEMSDFFEATITEGAEAKQASNWLMGEVSAYLNSAQKELEDTKLTPQGLAGMIKLIEKGTISSKIAKKVFKELIENGGDAETIVKEKGLVQISDEGALLKLVTEALDNNPQSIEDFRNGKDRAIGFLVGQIMKASKGQANPPMVNKILLEEIKKR</sequence>
<name>GATB_BACP2</name>
<reference key="1">
    <citation type="journal article" date="2007" name="PLoS ONE">
        <title>Paradoxical DNA repair and peroxide resistance gene conservation in Bacillus pumilus SAFR-032.</title>
        <authorList>
            <person name="Gioia J."/>
            <person name="Yerrapragada S."/>
            <person name="Qin X."/>
            <person name="Jiang H."/>
            <person name="Igboeli O.C."/>
            <person name="Muzny D."/>
            <person name="Dugan-Rocha S."/>
            <person name="Ding Y."/>
            <person name="Hawes A."/>
            <person name="Liu W."/>
            <person name="Perez L."/>
            <person name="Kovar C."/>
            <person name="Dinh H."/>
            <person name="Lee S."/>
            <person name="Nazareth L."/>
            <person name="Blyth P."/>
            <person name="Holder M."/>
            <person name="Buhay C."/>
            <person name="Tirumalai M.R."/>
            <person name="Liu Y."/>
            <person name="Dasgupta I."/>
            <person name="Bokhetache L."/>
            <person name="Fujita M."/>
            <person name="Karouia F."/>
            <person name="Eswara Moorthy P."/>
            <person name="Siefert J."/>
            <person name="Uzman A."/>
            <person name="Buzumbo P."/>
            <person name="Verma A."/>
            <person name="Zwiya H."/>
            <person name="McWilliams B.D."/>
            <person name="Olowu A."/>
            <person name="Clinkenbeard K.D."/>
            <person name="Newcombe D."/>
            <person name="Golebiewski L."/>
            <person name="Petrosino J.F."/>
            <person name="Nicholson W.L."/>
            <person name="Fox G.E."/>
            <person name="Venkateswaran K."/>
            <person name="Highlander S.K."/>
            <person name="Weinstock G.M."/>
        </authorList>
    </citation>
    <scope>NUCLEOTIDE SEQUENCE [LARGE SCALE GENOMIC DNA]</scope>
    <source>
        <strain>SAFR-032</strain>
    </source>
</reference>
<accession>A8FAS1</accession>
<keyword id="KW-0067">ATP-binding</keyword>
<keyword id="KW-0436">Ligase</keyword>
<keyword id="KW-0547">Nucleotide-binding</keyword>
<keyword id="KW-0648">Protein biosynthesis</keyword>
<proteinExistence type="inferred from homology"/>
<protein>
    <recommendedName>
        <fullName evidence="1">Aspartyl/glutamyl-tRNA(Asn/Gln) amidotransferase subunit B</fullName>
        <shortName evidence="1">Asp/Glu-ADT subunit B</shortName>
        <ecNumber evidence="1">6.3.5.-</ecNumber>
    </recommendedName>
</protein>
<dbReference type="EC" id="6.3.5.-" evidence="1"/>
<dbReference type="EMBL" id="CP000813">
    <property type="protein sequence ID" value="ABV61338.1"/>
    <property type="molecule type" value="Genomic_DNA"/>
</dbReference>
<dbReference type="RefSeq" id="WP_012009185.1">
    <property type="nucleotide sequence ID" value="NZ_VEIS01000001.1"/>
</dbReference>
<dbReference type="SMR" id="A8FAS1"/>
<dbReference type="STRING" id="315750.BPUM_0646"/>
<dbReference type="GeneID" id="5619894"/>
<dbReference type="KEGG" id="bpu:BPUM_0646"/>
<dbReference type="eggNOG" id="COG0064">
    <property type="taxonomic scope" value="Bacteria"/>
</dbReference>
<dbReference type="HOGENOM" id="CLU_019240_0_0_9"/>
<dbReference type="OrthoDB" id="9804078at2"/>
<dbReference type="Proteomes" id="UP000001355">
    <property type="component" value="Chromosome"/>
</dbReference>
<dbReference type="GO" id="GO:0050566">
    <property type="term" value="F:asparaginyl-tRNA synthase (glutamine-hydrolyzing) activity"/>
    <property type="evidence" value="ECO:0007669"/>
    <property type="project" value="RHEA"/>
</dbReference>
<dbReference type="GO" id="GO:0005524">
    <property type="term" value="F:ATP binding"/>
    <property type="evidence" value="ECO:0007669"/>
    <property type="project" value="UniProtKB-KW"/>
</dbReference>
<dbReference type="GO" id="GO:0050567">
    <property type="term" value="F:glutaminyl-tRNA synthase (glutamine-hydrolyzing) activity"/>
    <property type="evidence" value="ECO:0007669"/>
    <property type="project" value="UniProtKB-UniRule"/>
</dbReference>
<dbReference type="GO" id="GO:0070681">
    <property type="term" value="P:glutaminyl-tRNAGln biosynthesis via transamidation"/>
    <property type="evidence" value="ECO:0007669"/>
    <property type="project" value="TreeGrafter"/>
</dbReference>
<dbReference type="GO" id="GO:0006412">
    <property type="term" value="P:translation"/>
    <property type="evidence" value="ECO:0007669"/>
    <property type="project" value="UniProtKB-UniRule"/>
</dbReference>
<dbReference type="FunFam" id="1.10.10.410:FF:000001">
    <property type="entry name" value="Aspartyl/glutamyl-tRNA(Asn/Gln) amidotransferase subunit B"/>
    <property type="match status" value="1"/>
</dbReference>
<dbReference type="FunFam" id="1.10.150.380:FF:000001">
    <property type="entry name" value="Aspartyl/glutamyl-tRNA(Asn/Gln) amidotransferase subunit B"/>
    <property type="match status" value="1"/>
</dbReference>
<dbReference type="Gene3D" id="1.10.10.410">
    <property type="match status" value="1"/>
</dbReference>
<dbReference type="Gene3D" id="1.10.150.380">
    <property type="entry name" value="GatB domain, N-terminal subdomain"/>
    <property type="match status" value="1"/>
</dbReference>
<dbReference type="HAMAP" id="MF_00121">
    <property type="entry name" value="GatB"/>
    <property type="match status" value="1"/>
</dbReference>
<dbReference type="InterPro" id="IPR017959">
    <property type="entry name" value="Asn/Gln-tRNA_amidoTrfase_suB/E"/>
</dbReference>
<dbReference type="InterPro" id="IPR006075">
    <property type="entry name" value="Asn/Gln-tRNA_Trfase_suB/E_cat"/>
</dbReference>
<dbReference type="InterPro" id="IPR018027">
    <property type="entry name" value="Asn/Gln_amidotransferase"/>
</dbReference>
<dbReference type="InterPro" id="IPR003789">
    <property type="entry name" value="Asn/Gln_tRNA_amidoTrase-B-like"/>
</dbReference>
<dbReference type="InterPro" id="IPR004413">
    <property type="entry name" value="GatB"/>
</dbReference>
<dbReference type="InterPro" id="IPR042114">
    <property type="entry name" value="GatB_C_1"/>
</dbReference>
<dbReference type="InterPro" id="IPR023168">
    <property type="entry name" value="GatB_Yqey_C_2"/>
</dbReference>
<dbReference type="InterPro" id="IPR017958">
    <property type="entry name" value="Gln-tRNA_amidoTrfase_suB_CS"/>
</dbReference>
<dbReference type="InterPro" id="IPR014746">
    <property type="entry name" value="Gln_synth/guanido_kin_cat_dom"/>
</dbReference>
<dbReference type="NCBIfam" id="TIGR00133">
    <property type="entry name" value="gatB"/>
    <property type="match status" value="1"/>
</dbReference>
<dbReference type="NCBIfam" id="NF004011">
    <property type="entry name" value="PRK05477.1-1"/>
    <property type="match status" value="1"/>
</dbReference>
<dbReference type="NCBIfam" id="NF004012">
    <property type="entry name" value="PRK05477.1-2"/>
    <property type="match status" value="1"/>
</dbReference>
<dbReference type="NCBIfam" id="NF004014">
    <property type="entry name" value="PRK05477.1-4"/>
    <property type="match status" value="1"/>
</dbReference>
<dbReference type="PANTHER" id="PTHR11659">
    <property type="entry name" value="GLUTAMYL-TRNA GLN AMIDOTRANSFERASE SUBUNIT B MITOCHONDRIAL AND PROKARYOTIC PET112-RELATED"/>
    <property type="match status" value="1"/>
</dbReference>
<dbReference type="PANTHER" id="PTHR11659:SF0">
    <property type="entry name" value="GLUTAMYL-TRNA(GLN) AMIDOTRANSFERASE SUBUNIT B, MITOCHONDRIAL"/>
    <property type="match status" value="1"/>
</dbReference>
<dbReference type="Pfam" id="PF02934">
    <property type="entry name" value="GatB_N"/>
    <property type="match status" value="1"/>
</dbReference>
<dbReference type="Pfam" id="PF02637">
    <property type="entry name" value="GatB_Yqey"/>
    <property type="match status" value="1"/>
</dbReference>
<dbReference type="SMART" id="SM00845">
    <property type="entry name" value="GatB_Yqey"/>
    <property type="match status" value="1"/>
</dbReference>
<dbReference type="SUPFAM" id="SSF89095">
    <property type="entry name" value="GatB/YqeY motif"/>
    <property type="match status" value="1"/>
</dbReference>
<dbReference type="SUPFAM" id="SSF55931">
    <property type="entry name" value="Glutamine synthetase/guanido kinase"/>
    <property type="match status" value="1"/>
</dbReference>
<dbReference type="PROSITE" id="PS01234">
    <property type="entry name" value="GATB"/>
    <property type="match status" value="1"/>
</dbReference>
<evidence type="ECO:0000255" key="1">
    <source>
        <dbReference type="HAMAP-Rule" id="MF_00121"/>
    </source>
</evidence>
<comment type="function">
    <text evidence="1">Allows the formation of correctly charged Asn-tRNA(Asn) or Gln-tRNA(Gln) through the transamidation of misacylated Asp-tRNA(Asn) or Glu-tRNA(Gln) in organisms which lack either or both of asparaginyl-tRNA or glutaminyl-tRNA synthetases. The reaction takes place in the presence of glutamine and ATP through an activated phospho-Asp-tRNA(Asn) or phospho-Glu-tRNA(Gln).</text>
</comment>
<comment type="catalytic activity">
    <reaction evidence="1">
        <text>L-glutamyl-tRNA(Gln) + L-glutamine + ATP + H2O = L-glutaminyl-tRNA(Gln) + L-glutamate + ADP + phosphate + H(+)</text>
        <dbReference type="Rhea" id="RHEA:17521"/>
        <dbReference type="Rhea" id="RHEA-COMP:9681"/>
        <dbReference type="Rhea" id="RHEA-COMP:9684"/>
        <dbReference type="ChEBI" id="CHEBI:15377"/>
        <dbReference type="ChEBI" id="CHEBI:15378"/>
        <dbReference type="ChEBI" id="CHEBI:29985"/>
        <dbReference type="ChEBI" id="CHEBI:30616"/>
        <dbReference type="ChEBI" id="CHEBI:43474"/>
        <dbReference type="ChEBI" id="CHEBI:58359"/>
        <dbReference type="ChEBI" id="CHEBI:78520"/>
        <dbReference type="ChEBI" id="CHEBI:78521"/>
        <dbReference type="ChEBI" id="CHEBI:456216"/>
    </reaction>
</comment>
<comment type="catalytic activity">
    <reaction evidence="1">
        <text>L-aspartyl-tRNA(Asn) + L-glutamine + ATP + H2O = L-asparaginyl-tRNA(Asn) + L-glutamate + ADP + phosphate + 2 H(+)</text>
        <dbReference type="Rhea" id="RHEA:14513"/>
        <dbReference type="Rhea" id="RHEA-COMP:9674"/>
        <dbReference type="Rhea" id="RHEA-COMP:9677"/>
        <dbReference type="ChEBI" id="CHEBI:15377"/>
        <dbReference type="ChEBI" id="CHEBI:15378"/>
        <dbReference type="ChEBI" id="CHEBI:29985"/>
        <dbReference type="ChEBI" id="CHEBI:30616"/>
        <dbReference type="ChEBI" id="CHEBI:43474"/>
        <dbReference type="ChEBI" id="CHEBI:58359"/>
        <dbReference type="ChEBI" id="CHEBI:78515"/>
        <dbReference type="ChEBI" id="CHEBI:78516"/>
        <dbReference type="ChEBI" id="CHEBI:456216"/>
    </reaction>
</comment>
<comment type="subunit">
    <text evidence="1">Heterotrimer of A, B and C subunits.</text>
</comment>
<comment type="similarity">
    <text evidence="1">Belongs to the GatB/GatE family. GatB subfamily.</text>
</comment>
<organism>
    <name type="scientific">Bacillus pumilus (strain SAFR-032)</name>
    <dbReference type="NCBI Taxonomy" id="315750"/>
    <lineage>
        <taxon>Bacteria</taxon>
        <taxon>Bacillati</taxon>
        <taxon>Bacillota</taxon>
        <taxon>Bacilli</taxon>
        <taxon>Bacillales</taxon>
        <taxon>Bacillaceae</taxon>
        <taxon>Bacillus</taxon>
    </lineage>
</organism>
<gene>
    <name evidence="1" type="primary">gatB</name>
    <name type="ordered locus">BPUM_0646</name>
</gene>
<feature type="chain" id="PRO_1000057799" description="Aspartyl/glutamyl-tRNA(Asn/Gln) amidotransferase subunit B">
    <location>
        <begin position="1"/>
        <end position="476"/>
    </location>
</feature>